<feature type="chain" id="PRO_0000088733" description="Thrombin-like enzyme TL-BJ 1">
    <location>
        <begin position="1"/>
        <end position="19" status="greater than"/>
    </location>
</feature>
<feature type="domain" description="Peptidase S1" evidence="2">
    <location>
        <begin position="1"/>
        <end position="19" status="greater than"/>
    </location>
</feature>
<feature type="non-terminal residue">
    <location>
        <position position="19"/>
    </location>
</feature>
<evidence type="ECO:0000250" key="1"/>
<evidence type="ECO:0000255" key="2">
    <source>
        <dbReference type="PROSITE-ProRule" id="PRU00274"/>
    </source>
</evidence>
<evidence type="ECO:0000269" key="3">
    <source>
    </source>
</evidence>
<dbReference type="EC" id="3.4.21.-"/>
<dbReference type="MEROPS" id="S01.353"/>
<dbReference type="GO" id="GO:0005576">
    <property type="term" value="C:extracellular region"/>
    <property type="evidence" value="ECO:0007669"/>
    <property type="project" value="UniProtKB-SubCell"/>
</dbReference>
<dbReference type="GO" id="GO:0008236">
    <property type="term" value="F:serine-type peptidase activity"/>
    <property type="evidence" value="ECO:0007669"/>
    <property type="project" value="UniProtKB-KW"/>
</dbReference>
<dbReference type="GO" id="GO:0090729">
    <property type="term" value="F:toxin activity"/>
    <property type="evidence" value="ECO:0007669"/>
    <property type="project" value="UniProtKB-KW"/>
</dbReference>
<dbReference type="GO" id="GO:0006508">
    <property type="term" value="P:proteolysis"/>
    <property type="evidence" value="ECO:0007669"/>
    <property type="project" value="UniProtKB-KW"/>
</dbReference>
<reference key="1">
    <citation type="journal article" date="2000" name="Thromb. Haemost.">
        <title>A novel fibrinogen-clotting enzyme, TL-BJ, from the venom of the snake Bothrops jararaca: purification and characterization.</title>
        <authorList>
            <person name="Serrano S.M.T."/>
            <person name="Sampaio C.A.M."/>
            <person name="Mentele R."/>
            <person name="Camargo A.C.M."/>
            <person name="Fink E."/>
        </authorList>
    </citation>
    <scope>PROTEIN SEQUENCE</scope>
    <scope>FUNCTION</scope>
    <scope>ACTIVITY REGULATION</scope>
    <source>
        <tissue>Venom</tissue>
    </source>
</reference>
<proteinExistence type="evidence at protein level"/>
<sequence>VIGGDECNINEHRSLALVY</sequence>
<comment type="function">
    <text evidence="3">Thrombin-like snake venom serine protease. Causes the specific clotting of fibrinogen (FGA) with release of fibrinopeptide A. The aberrant fibrinogen is then incapable of being cross-linked, forming easily dispersible clots.</text>
</comment>
<comment type="activity regulation">
    <text evidence="3">Inhibited by PMSF, but not by hirudin.</text>
</comment>
<comment type="subunit">
    <text evidence="1">Monomer.</text>
</comment>
<comment type="subcellular location">
    <subcellularLocation>
        <location>Secreted</location>
    </subcellularLocation>
</comment>
<comment type="tissue specificity">
    <text>Expressed by the venom gland.</text>
</comment>
<comment type="PTM">
    <text>N-glycosylated.</text>
</comment>
<comment type="similarity">
    <text evidence="2">Belongs to the peptidase S1 family. Snake venom subfamily.</text>
</comment>
<organism>
    <name type="scientific">Bothrops jararaca</name>
    <name type="common">Jararaca</name>
    <name type="synonym">Bothrops jajaraca</name>
    <dbReference type="NCBI Taxonomy" id="8724"/>
    <lineage>
        <taxon>Eukaryota</taxon>
        <taxon>Metazoa</taxon>
        <taxon>Chordata</taxon>
        <taxon>Craniata</taxon>
        <taxon>Vertebrata</taxon>
        <taxon>Euteleostomi</taxon>
        <taxon>Lepidosauria</taxon>
        <taxon>Squamata</taxon>
        <taxon>Bifurcata</taxon>
        <taxon>Unidentata</taxon>
        <taxon>Episquamata</taxon>
        <taxon>Toxicofera</taxon>
        <taxon>Serpentes</taxon>
        <taxon>Colubroidea</taxon>
        <taxon>Viperidae</taxon>
        <taxon>Crotalinae</taxon>
        <taxon>Bothrops</taxon>
    </lineage>
</organism>
<keyword id="KW-1204">Blood coagulation cascade activating toxin</keyword>
<keyword id="KW-0903">Direct protein sequencing</keyword>
<keyword id="KW-0325">Glycoprotein</keyword>
<keyword id="KW-1199">Hemostasis impairing toxin</keyword>
<keyword id="KW-0378">Hydrolase</keyword>
<keyword id="KW-0645">Protease</keyword>
<keyword id="KW-0964">Secreted</keyword>
<keyword id="KW-0720">Serine protease</keyword>
<keyword id="KW-0800">Toxin</keyword>
<accession>P81882</accession>
<name>VSPT1_BOTJA</name>
<protein>
    <recommendedName>
        <fullName>Thrombin-like enzyme TL-BJ 1</fullName>
        <shortName>SVTLE</shortName>
        <ecNumber>3.4.21.-</ecNumber>
    </recommendedName>
    <alternativeName>
        <fullName>Fibrinogen-clotting enzyme TL-BJ isoform 1</fullName>
    </alternativeName>
    <alternativeName>
        <fullName>Snake venom serine protease</fullName>
        <shortName>SVSP</shortName>
    </alternativeName>
</protein>